<reference key="1">
    <citation type="journal article" date="2008" name="BMC Genomics">
        <title>The genome of Aeromonas salmonicida subsp. salmonicida A449: insights into the evolution of a fish pathogen.</title>
        <authorList>
            <person name="Reith M.E."/>
            <person name="Singh R.K."/>
            <person name="Curtis B."/>
            <person name="Boyd J.M."/>
            <person name="Bouevitch A."/>
            <person name="Kimball J."/>
            <person name="Munholland J."/>
            <person name="Murphy C."/>
            <person name="Sarty D."/>
            <person name="Williams J."/>
            <person name="Nash J.H."/>
            <person name="Johnson S.C."/>
            <person name="Brown L.L."/>
        </authorList>
    </citation>
    <scope>NUCLEOTIDE SEQUENCE [LARGE SCALE GENOMIC DNA]</scope>
    <source>
        <strain>A449</strain>
    </source>
</reference>
<evidence type="ECO:0000255" key="1">
    <source>
        <dbReference type="HAMAP-Rule" id="MF_00065"/>
    </source>
</evidence>
<organism>
    <name type="scientific">Aeromonas salmonicida (strain A449)</name>
    <dbReference type="NCBI Taxonomy" id="382245"/>
    <lineage>
        <taxon>Bacteria</taxon>
        <taxon>Pseudomonadati</taxon>
        <taxon>Pseudomonadota</taxon>
        <taxon>Gammaproteobacteria</taxon>
        <taxon>Aeromonadales</taxon>
        <taxon>Aeromonadaceae</taxon>
        <taxon>Aeromonas</taxon>
    </lineage>
</organism>
<proteinExistence type="inferred from homology"/>
<accession>A4SRG6</accession>
<dbReference type="EC" id="2.7.1.25" evidence="1"/>
<dbReference type="EMBL" id="CP000644">
    <property type="protein sequence ID" value="ABO91488.1"/>
    <property type="molecule type" value="Genomic_DNA"/>
</dbReference>
<dbReference type="RefSeq" id="WP_005318774.1">
    <property type="nucleotide sequence ID" value="NC_009348.1"/>
</dbReference>
<dbReference type="SMR" id="A4SRG6"/>
<dbReference type="STRING" id="29491.GCA_000820065_04519"/>
<dbReference type="KEGG" id="asa:ASA_3520"/>
<dbReference type="eggNOG" id="COG0529">
    <property type="taxonomic scope" value="Bacteria"/>
</dbReference>
<dbReference type="HOGENOM" id="CLU_046932_1_0_6"/>
<dbReference type="UniPathway" id="UPA00140">
    <property type="reaction ID" value="UER00205"/>
</dbReference>
<dbReference type="Proteomes" id="UP000000225">
    <property type="component" value="Chromosome"/>
</dbReference>
<dbReference type="GO" id="GO:0004020">
    <property type="term" value="F:adenylylsulfate kinase activity"/>
    <property type="evidence" value="ECO:0007669"/>
    <property type="project" value="UniProtKB-UniRule"/>
</dbReference>
<dbReference type="GO" id="GO:0005524">
    <property type="term" value="F:ATP binding"/>
    <property type="evidence" value="ECO:0007669"/>
    <property type="project" value="UniProtKB-UniRule"/>
</dbReference>
<dbReference type="GO" id="GO:0070814">
    <property type="term" value="P:hydrogen sulfide biosynthetic process"/>
    <property type="evidence" value="ECO:0007669"/>
    <property type="project" value="UniProtKB-UniRule"/>
</dbReference>
<dbReference type="GO" id="GO:0000103">
    <property type="term" value="P:sulfate assimilation"/>
    <property type="evidence" value="ECO:0007669"/>
    <property type="project" value="UniProtKB-UniRule"/>
</dbReference>
<dbReference type="CDD" id="cd02027">
    <property type="entry name" value="APSK"/>
    <property type="match status" value="1"/>
</dbReference>
<dbReference type="FunFam" id="3.40.50.300:FF:000212">
    <property type="entry name" value="Adenylyl-sulfate kinase"/>
    <property type="match status" value="1"/>
</dbReference>
<dbReference type="Gene3D" id="3.40.50.300">
    <property type="entry name" value="P-loop containing nucleotide triphosphate hydrolases"/>
    <property type="match status" value="1"/>
</dbReference>
<dbReference type="HAMAP" id="MF_00065">
    <property type="entry name" value="Adenylyl_sulf_kinase"/>
    <property type="match status" value="1"/>
</dbReference>
<dbReference type="InterPro" id="IPR002891">
    <property type="entry name" value="APS_kinase"/>
</dbReference>
<dbReference type="InterPro" id="IPR027417">
    <property type="entry name" value="P-loop_NTPase"/>
</dbReference>
<dbReference type="NCBIfam" id="TIGR00455">
    <property type="entry name" value="apsK"/>
    <property type="match status" value="1"/>
</dbReference>
<dbReference type="NCBIfam" id="NF003013">
    <property type="entry name" value="PRK03846.1"/>
    <property type="match status" value="1"/>
</dbReference>
<dbReference type="PANTHER" id="PTHR11055:SF63">
    <property type="entry name" value="ADENYLYL-SULFATE KINASE 1, CHLOROPLASTIC"/>
    <property type="match status" value="1"/>
</dbReference>
<dbReference type="PANTHER" id="PTHR11055">
    <property type="entry name" value="BIFUNCTIONAL 3'-PHOSPHOADENOSINE 5'-PHOSPHOSULFATE SYNTHASE"/>
    <property type="match status" value="1"/>
</dbReference>
<dbReference type="Pfam" id="PF01583">
    <property type="entry name" value="APS_kinase"/>
    <property type="match status" value="1"/>
</dbReference>
<dbReference type="SUPFAM" id="SSF52540">
    <property type="entry name" value="P-loop containing nucleoside triphosphate hydrolases"/>
    <property type="match status" value="1"/>
</dbReference>
<keyword id="KW-0067">ATP-binding</keyword>
<keyword id="KW-0418">Kinase</keyword>
<keyword id="KW-0547">Nucleotide-binding</keyword>
<keyword id="KW-0597">Phosphoprotein</keyword>
<keyword id="KW-0808">Transferase</keyword>
<feature type="chain" id="PRO_1000092236" description="Adenylyl-sulfate kinase">
    <location>
        <begin position="1"/>
        <end position="196"/>
    </location>
</feature>
<feature type="active site" description="Phosphoserine intermediate" evidence="1">
    <location>
        <position position="105"/>
    </location>
</feature>
<feature type="binding site" evidence="1">
    <location>
        <begin position="31"/>
        <end position="38"/>
    </location>
    <ligand>
        <name>ATP</name>
        <dbReference type="ChEBI" id="CHEBI:30616"/>
    </ligand>
</feature>
<gene>
    <name evidence="1" type="primary">cysC</name>
    <name type="ordered locus">ASA_3520</name>
</gene>
<comment type="function">
    <text evidence="1">Catalyzes the synthesis of activated sulfate.</text>
</comment>
<comment type="catalytic activity">
    <reaction evidence="1">
        <text>adenosine 5'-phosphosulfate + ATP = 3'-phosphoadenylyl sulfate + ADP + H(+)</text>
        <dbReference type="Rhea" id="RHEA:24152"/>
        <dbReference type="ChEBI" id="CHEBI:15378"/>
        <dbReference type="ChEBI" id="CHEBI:30616"/>
        <dbReference type="ChEBI" id="CHEBI:58243"/>
        <dbReference type="ChEBI" id="CHEBI:58339"/>
        <dbReference type="ChEBI" id="CHEBI:456216"/>
        <dbReference type="EC" id="2.7.1.25"/>
    </reaction>
</comment>
<comment type="pathway">
    <text evidence="1">Sulfur metabolism; hydrogen sulfide biosynthesis; sulfite from sulfate: step 2/3.</text>
</comment>
<comment type="similarity">
    <text evidence="1">Belongs to the APS kinase family.</text>
</comment>
<protein>
    <recommendedName>
        <fullName evidence="1">Adenylyl-sulfate kinase</fullName>
        <ecNumber evidence="1">2.7.1.25</ecNumber>
    </recommendedName>
    <alternativeName>
        <fullName evidence="1">APS kinase</fullName>
    </alternativeName>
    <alternativeName>
        <fullName evidence="1">ATP adenosine-5'-phosphosulfate 3'-phosphotransferase</fullName>
    </alternativeName>
    <alternativeName>
        <fullName evidence="1">Adenosine-5'-phosphosulfate kinase</fullName>
    </alternativeName>
</protein>
<sequence>MSNIVWHQHAVSKQSRSELKGQKPLVIWFTGLSGAGKSTLAGALEQALAVEGKHTYLLDGDNVRHGLCGDLGFDDAARQENIRRVGEVAKLMVDAGLIVLTAFISPFRAERELVRNLLGADEFVEVFVDAPLAVCEERDPKGLYKKARAGEIRNFTGIDSAYEAPKQPEIHLLNAGKPVAALVDELLTALRQGNYL</sequence>
<name>CYSC_AERS4</name>